<gene>
    <name evidence="1" type="primary">gltX</name>
    <name type="ordered locus">BALH_0087</name>
</gene>
<protein>
    <recommendedName>
        <fullName evidence="1">Glutamate--tRNA ligase</fullName>
        <ecNumber evidence="1">6.1.1.17</ecNumber>
    </recommendedName>
    <alternativeName>
        <fullName evidence="1">Glutamyl-tRNA synthetase</fullName>
        <shortName evidence="1">GluRS</shortName>
    </alternativeName>
</protein>
<comment type="function">
    <text evidence="1">Catalyzes the attachment of glutamate to tRNA(Glu) in a two-step reaction: glutamate is first activated by ATP to form Glu-AMP and then transferred to the acceptor end of tRNA(Glu).</text>
</comment>
<comment type="catalytic activity">
    <reaction evidence="1">
        <text>tRNA(Glu) + L-glutamate + ATP = L-glutamyl-tRNA(Glu) + AMP + diphosphate</text>
        <dbReference type="Rhea" id="RHEA:23540"/>
        <dbReference type="Rhea" id="RHEA-COMP:9663"/>
        <dbReference type="Rhea" id="RHEA-COMP:9680"/>
        <dbReference type="ChEBI" id="CHEBI:29985"/>
        <dbReference type="ChEBI" id="CHEBI:30616"/>
        <dbReference type="ChEBI" id="CHEBI:33019"/>
        <dbReference type="ChEBI" id="CHEBI:78442"/>
        <dbReference type="ChEBI" id="CHEBI:78520"/>
        <dbReference type="ChEBI" id="CHEBI:456215"/>
        <dbReference type="EC" id="6.1.1.17"/>
    </reaction>
</comment>
<comment type="subunit">
    <text evidence="1">Monomer.</text>
</comment>
<comment type="subcellular location">
    <subcellularLocation>
        <location evidence="1">Cytoplasm</location>
    </subcellularLocation>
</comment>
<comment type="similarity">
    <text evidence="1">Belongs to the class-I aminoacyl-tRNA synthetase family. Glutamate--tRNA ligase type 1 subfamily.</text>
</comment>
<comment type="sequence caution" evidence="2">
    <conflict type="erroneous initiation">
        <sequence resource="EMBL-CDS" id="ABK83502"/>
    </conflict>
</comment>
<proteinExistence type="inferred from homology"/>
<name>SYE_BACAH</name>
<accession>A0R8F9</accession>
<sequence>MEKQVRVRYAPSPTGHLHIGNARTALFNYLFARHQDGKFIIRIEDTDVKRNVAGGEESQLKYLKWLGMDWDEGVDVGGEFGPYRQTERLDIYKKLYEDLLERGLAYKCYMTEEELEAEREGQIARGETPRYAGNHRDLTEAQVKEFEAEGRIPSIRFRVPADRDYTFKDIVKDEVAFHSNDFGDFVIVKKDGIPTYNFAVAVDDHLMEITHVLRGDDHISNTPKQMMIYEAFGWDIPQFGHMTLIVNESRKKLSKRDESIIQFIEQYKELGYLPEAIFNFIALLGWSPVGEEEIFSQEEFIKMFDAARLSKSPALFDSQKLKWMNNQYMKKQDLDTVVELSLPHLVKAGRIGETLSEQEQAWIRDVIALYHEQMSFGAEIVELSEMFFKDHVDYEEEGQEVLKGEQVPEVLRAFAGQVEALEAMEPAAIKAAIKAVQKETGHKGKNLFMPIRVATTGQTHGPELPNAIALLGKEKVLNRLQKVIG</sequence>
<keyword id="KW-0030">Aminoacyl-tRNA synthetase</keyword>
<keyword id="KW-0067">ATP-binding</keyword>
<keyword id="KW-0963">Cytoplasm</keyword>
<keyword id="KW-0436">Ligase</keyword>
<keyword id="KW-0547">Nucleotide-binding</keyword>
<keyword id="KW-0648">Protein biosynthesis</keyword>
<organism>
    <name type="scientific">Bacillus thuringiensis (strain Al Hakam)</name>
    <dbReference type="NCBI Taxonomy" id="412694"/>
    <lineage>
        <taxon>Bacteria</taxon>
        <taxon>Bacillati</taxon>
        <taxon>Bacillota</taxon>
        <taxon>Bacilli</taxon>
        <taxon>Bacillales</taxon>
        <taxon>Bacillaceae</taxon>
        <taxon>Bacillus</taxon>
        <taxon>Bacillus cereus group</taxon>
    </lineage>
</organism>
<feature type="chain" id="PRO_0000330955" description="Glutamate--tRNA ligase">
    <location>
        <begin position="1"/>
        <end position="485"/>
    </location>
</feature>
<feature type="short sequence motif" description="'HIGH' region" evidence="1">
    <location>
        <begin position="11"/>
        <end position="21"/>
    </location>
</feature>
<feature type="short sequence motif" description="'KMSKS' region" evidence="1">
    <location>
        <begin position="252"/>
        <end position="256"/>
    </location>
</feature>
<feature type="binding site" evidence="1">
    <location>
        <position position="255"/>
    </location>
    <ligand>
        <name>ATP</name>
        <dbReference type="ChEBI" id="CHEBI:30616"/>
    </ligand>
</feature>
<evidence type="ECO:0000255" key="1">
    <source>
        <dbReference type="HAMAP-Rule" id="MF_00022"/>
    </source>
</evidence>
<evidence type="ECO:0000305" key="2"/>
<reference key="1">
    <citation type="journal article" date="2007" name="J. Bacteriol.">
        <title>The complete genome sequence of Bacillus thuringiensis Al Hakam.</title>
        <authorList>
            <person name="Challacombe J.F."/>
            <person name="Altherr M.R."/>
            <person name="Xie G."/>
            <person name="Bhotika S.S."/>
            <person name="Brown N."/>
            <person name="Bruce D."/>
            <person name="Campbell C.S."/>
            <person name="Campbell M.L."/>
            <person name="Chen J."/>
            <person name="Chertkov O."/>
            <person name="Cleland C."/>
            <person name="Dimitrijevic M."/>
            <person name="Doggett N.A."/>
            <person name="Fawcett J.J."/>
            <person name="Glavina T."/>
            <person name="Goodwin L.A."/>
            <person name="Green L.D."/>
            <person name="Han C.S."/>
            <person name="Hill K.K."/>
            <person name="Hitchcock P."/>
            <person name="Jackson P.J."/>
            <person name="Keim P."/>
            <person name="Kewalramani A.R."/>
            <person name="Longmire J."/>
            <person name="Lucas S."/>
            <person name="Malfatti S."/>
            <person name="Martinez D."/>
            <person name="McMurry K."/>
            <person name="Meincke L.J."/>
            <person name="Misra M."/>
            <person name="Moseman B.L."/>
            <person name="Mundt M."/>
            <person name="Munk A.C."/>
            <person name="Okinaka R.T."/>
            <person name="Parson-Quintana B."/>
            <person name="Reilly L.P."/>
            <person name="Richardson P."/>
            <person name="Robinson D.L."/>
            <person name="Saunders E."/>
            <person name="Tapia R."/>
            <person name="Tesmer J.G."/>
            <person name="Thayer N."/>
            <person name="Thompson L.S."/>
            <person name="Tice H."/>
            <person name="Ticknor L.O."/>
            <person name="Wills P.L."/>
            <person name="Gilna P."/>
            <person name="Brettin T.S."/>
        </authorList>
    </citation>
    <scope>NUCLEOTIDE SEQUENCE [LARGE SCALE GENOMIC DNA]</scope>
    <source>
        <strain>Al Hakam</strain>
    </source>
</reference>
<dbReference type="EC" id="6.1.1.17" evidence="1"/>
<dbReference type="EMBL" id="CP000485">
    <property type="protein sequence ID" value="ABK83502.1"/>
    <property type="status" value="ALT_INIT"/>
    <property type="molecule type" value="Genomic_DNA"/>
</dbReference>
<dbReference type="RefSeq" id="WP_000415154.1">
    <property type="nucleotide sequence ID" value="NC_008600.1"/>
</dbReference>
<dbReference type="SMR" id="A0R8F9"/>
<dbReference type="GeneID" id="93010966"/>
<dbReference type="KEGG" id="btl:BALH_0087"/>
<dbReference type="HOGENOM" id="CLU_015768_6_1_9"/>
<dbReference type="GO" id="GO:0005829">
    <property type="term" value="C:cytosol"/>
    <property type="evidence" value="ECO:0007669"/>
    <property type="project" value="TreeGrafter"/>
</dbReference>
<dbReference type="GO" id="GO:0005524">
    <property type="term" value="F:ATP binding"/>
    <property type="evidence" value="ECO:0007669"/>
    <property type="project" value="UniProtKB-UniRule"/>
</dbReference>
<dbReference type="GO" id="GO:0004818">
    <property type="term" value="F:glutamate-tRNA ligase activity"/>
    <property type="evidence" value="ECO:0007669"/>
    <property type="project" value="UniProtKB-UniRule"/>
</dbReference>
<dbReference type="GO" id="GO:0000049">
    <property type="term" value="F:tRNA binding"/>
    <property type="evidence" value="ECO:0007669"/>
    <property type="project" value="InterPro"/>
</dbReference>
<dbReference type="GO" id="GO:0008270">
    <property type="term" value="F:zinc ion binding"/>
    <property type="evidence" value="ECO:0007669"/>
    <property type="project" value="InterPro"/>
</dbReference>
<dbReference type="GO" id="GO:0006424">
    <property type="term" value="P:glutamyl-tRNA aminoacylation"/>
    <property type="evidence" value="ECO:0007669"/>
    <property type="project" value="UniProtKB-UniRule"/>
</dbReference>
<dbReference type="CDD" id="cd00808">
    <property type="entry name" value="GluRS_core"/>
    <property type="match status" value="1"/>
</dbReference>
<dbReference type="FunFam" id="1.10.10.350:FF:000002">
    <property type="entry name" value="Glutamate--tRNA ligase"/>
    <property type="match status" value="1"/>
</dbReference>
<dbReference type="FunFam" id="3.40.50.620:FF:000007">
    <property type="entry name" value="Glutamate--tRNA ligase"/>
    <property type="match status" value="1"/>
</dbReference>
<dbReference type="Gene3D" id="1.10.10.350">
    <property type="match status" value="1"/>
</dbReference>
<dbReference type="Gene3D" id="3.40.50.620">
    <property type="entry name" value="HUPs"/>
    <property type="match status" value="1"/>
</dbReference>
<dbReference type="HAMAP" id="MF_00022">
    <property type="entry name" value="Glu_tRNA_synth_type1"/>
    <property type="match status" value="1"/>
</dbReference>
<dbReference type="InterPro" id="IPR045462">
    <property type="entry name" value="aa-tRNA-synth_I_cd-bd"/>
</dbReference>
<dbReference type="InterPro" id="IPR020751">
    <property type="entry name" value="aa-tRNA-synth_I_codon-bd_sub2"/>
</dbReference>
<dbReference type="InterPro" id="IPR001412">
    <property type="entry name" value="aa-tRNA-synth_I_CS"/>
</dbReference>
<dbReference type="InterPro" id="IPR008925">
    <property type="entry name" value="aa_tRNA-synth_I_cd-bd_sf"/>
</dbReference>
<dbReference type="InterPro" id="IPR004527">
    <property type="entry name" value="Glu-tRNA-ligase_bac/mito"/>
</dbReference>
<dbReference type="InterPro" id="IPR000924">
    <property type="entry name" value="Glu/Gln-tRNA-synth"/>
</dbReference>
<dbReference type="InterPro" id="IPR020058">
    <property type="entry name" value="Glu/Gln-tRNA-synth_Ib_cat-dom"/>
</dbReference>
<dbReference type="InterPro" id="IPR049940">
    <property type="entry name" value="GluQ/Sye"/>
</dbReference>
<dbReference type="InterPro" id="IPR033910">
    <property type="entry name" value="GluRS_core"/>
</dbReference>
<dbReference type="InterPro" id="IPR014729">
    <property type="entry name" value="Rossmann-like_a/b/a_fold"/>
</dbReference>
<dbReference type="NCBIfam" id="TIGR00464">
    <property type="entry name" value="gltX_bact"/>
    <property type="match status" value="1"/>
</dbReference>
<dbReference type="PANTHER" id="PTHR43311">
    <property type="entry name" value="GLUTAMATE--TRNA LIGASE"/>
    <property type="match status" value="1"/>
</dbReference>
<dbReference type="PANTHER" id="PTHR43311:SF2">
    <property type="entry name" value="GLUTAMATE--TRNA LIGASE, MITOCHONDRIAL-RELATED"/>
    <property type="match status" value="1"/>
</dbReference>
<dbReference type="Pfam" id="PF19269">
    <property type="entry name" value="Anticodon_2"/>
    <property type="match status" value="1"/>
</dbReference>
<dbReference type="Pfam" id="PF00749">
    <property type="entry name" value="tRNA-synt_1c"/>
    <property type="match status" value="1"/>
</dbReference>
<dbReference type="PRINTS" id="PR00987">
    <property type="entry name" value="TRNASYNTHGLU"/>
</dbReference>
<dbReference type="SUPFAM" id="SSF48163">
    <property type="entry name" value="An anticodon-binding domain of class I aminoacyl-tRNA synthetases"/>
    <property type="match status" value="1"/>
</dbReference>
<dbReference type="SUPFAM" id="SSF52374">
    <property type="entry name" value="Nucleotidylyl transferase"/>
    <property type="match status" value="1"/>
</dbReference>
<dbReference type="PROSITE" id="PS00178">
    <property type="entry name" value="AA_TRNA_LIGASE_I"/>
    <property type="match status" value="1"/>
</dbReference>